<feature type="chain" id="PRO_1000093247" description="Phosphomethylpyrimidine synthase">
    <location>
        <begin position="1"/>
        <end position="625"/>
    </location>
</feature>
<feature type="binding site" evidence="1">
    <location>
        <position position="230"/>
    </location>
    <ligand>
        <name>substrate</name>
    </ligand>
</feature>
<feature type="binding site" evidence="1">
    <location>
        <position position="259"/>
    </location>
    <ligand>
        <name>substrate</name>
    </ligand>
</feature>
<feature type="binding site" evidence="1">
    <location>
        <position position="288"/>
    </location>
    <ligand>
        <name>substrate</name>
    </ligand>
</feature>
<feature type="binding site" evidence="1">
    <location>
        <position position="324"/>
    </location>
    <ligand>
        <name>substrate</name>
    </ligand>
</feature>
<feature type="binding site" evidence="1">
    <location>
        <begin position="344"/>
        <end position="346"/>
    </location>
    <ligand>
        <name>substrate</name>
    </ligand>
</feature>
<feature type="binding site" evidence="1">
    <location>
        <begin position="385"/>
        <end position="388"/>
    </location>
    <ligand>
        <name>substrate</name>
    </ligand>
</feature>
<feature type="binding site" evidence="1">
    <location>
        <position position="424"/>
    </location>
    <ligand>
        <name>substrate</name>
    </ligand>
</feature>
<feature type="binding site" evidence="1">
    <location>
        <position position="428"/>
    </location>
    <ligand>
        <name>Zn(2+)</name>
        <dbReference type="ChEBI" id="CHEBI:29105"/>
    </ligand>
</feature>
<feature type="binding site" evidence="1">
    <location>
        <position position="451"/>
    </location>
    <ligand>
        <name>substrate</name>
    </ligand>
</feature>
<feature type="binding site" evidence="1">
    <location>
        <position position="492"/>
    </location>
    <ligand>
        <name>Zn(2+)</name>
        <dbReference type="ChEBI" id="CHEBI:29105"/>
    </ligand>
</feature>
<feature type="binding site" evidence="1">
    <location>
        <position position="572"/>
    </location>
    <ligand>
        <name>[4Fe-4S] cluster</name>
        <dbReference type="ChEBI" id="CHEBI:49883"/>
        <note>4Fe-4S-S-AdoMet</note>
    </ligand>
</feature>
<feature type="binding site" evidence="1">
    <location>
        <position position="575"/>
    </location>
    <ligand>
        <name>[4Fe-4S] cluster</name>
        <dbReference type="ChEBI" id="CHEBI:49883"/>
        <note>4Fe-4S-S-AdoMet</note>
    </ligand>
</feature>
<feature type="binding site" evidence="1">
    <location>
        <position position="580"/>
    </location>
    <ligand>
        <name>[4Fe-4S] cluster</name>
        <dbReference type="ChEBI" id="CHEBI:49883"/>
        <note>4Fe-4S-S-AdoMet</note>
    </ligand>
</feature>
<comment type="function">
    <text evidence="1">Catalyzes the synthesis of the hydroxymethylpyrimidine phosphate (HMP-P) moiety of thiamine from aminoimidazole ribotide (AIR) in a radical S-adenosyl-L-methionine (SAM)-dependent reaction.</text>
</comment>
<comment type="catalytic activity">
    <reaction evidence="1">
        <text>5-amino-1-(5-phospho-beta-D-ribosyl)imidazole + S-adenosyl-L-methionine = 4-amino-2-methyl-5-(phosphooxymethyl)pyrimidine + CO + 5'-deoxyadenosine + formate + L-methionine + 3 H(+)</text>
        <dbReference type="Rhea" id="RHEA:24840"/>
        <dbReference type="ChEBI" id="CHEBI:15378"/>
        <dbReference type="ChEBI" id="CHEBI:15740"/>
        <dbReference type="ChEBI" id="CHEBI:17245"/>
        <dbReference type="ChEBI" id="CHEBI:17319"/>
        <dbReference type="ChEBI" id="CHEBI:57844"/>
        <dbReference type="ChEBI" id="CHEBI:58354"/>
        <dbReference type="ChEBI" id="CHEBI:59789"/>
        <dbReference type="ChEBI" id="CHEBI:137981"/>
        <dbReference type="EC" id="4.1.99.17"/>
    </reaction>
</comment>
<comment type="cofactor">
    <cofactor evidence="1">
        <name>[4Fe-4S] cluster</name>
        <dbReference type="ChEBI" id="CHEBI:49883"/>
    </cofactor>
    <text evidence="1">Binds 1 [4Fe-4S] cluster per subunit. The cluster is coordinated with 3 cysteines and an exchangeable S-adenosyl-L-methionine.</text>
</comment>
<comment type="pathway">
    <text evidence="1">Cofactor biosynthesis; thiamine diphosphate biosynthesis.</text>
</comment>
<comment type="subunit">
    <text evidence="1">Homodimer.</text>
</comment>
<comment type="similarity">
    <text evidence="1">Belongs to the ThiC family.</text>
</comment>
<dbReference type="EC" id="4.1.99.17" evidence="1"/>
<dbReference type="EMBL" id="CP000967">
    <property type="protein sequence ID" value="ACD60885.1"/>
    <property type="molecule type" value="Genomic_DNA"/>
</dbReference>
<dbReference type="RefSeq" id="WP_011407693.1">
    <property type="nucleotide sequence ID" value="NC_010717.2"/>
</dbReference>
<dbReference type="SMR" id="B2SNG3"/>
<dbReference type="KEGG" id="xop:PXO_02603"/>
<dbReference type="eggNOG" id="COG0422">
    <property type="taxonomic scope" value="Bacteria"/>
</dbReference>
<dbReference type="HOGENOM" id="CLU_013181_2_1_6"/>
<dbReference type="UniPathway" id="UPA00060"/>
<dbReference type="Proteomes" id="UP000001740">
    <property type="component" value="Chromosome"/>
</dbReference>
<dbReference type="GO" id="GO:0005829">
    <property type="term" value="C:cytosol"/>
    <property type="evidence" value="ECO:0007669"/>
    <property type="project" value="TreeGrafter"/>
</dbReference>
<dbReference type="GO" id="GO:0051539">
    <property type="term" value="F:4 iron, 4 sulfur cluster binding"/>
    <property type="evidence" value="ECO:0007669"/>
    <property type="project" value="UniProtKB-KW"/>
</dbReference>
<dbReference type="GO" id="GO:0016830">
    <property type="term" value="F:carbon-carbon lyase activity"/>
    <property type="evidence" value="ECO:0007669"/>
    <property type="project" value="InterPro"/>
</dbReference>
<dbReference type="GO" id="GO:0008270">
    <property type="term" value="F:zinc ion binding"/>
    <property type="evidence" value="ECO:0007669"/>
    <property type="project" value="UniProtKB-UniRule"/>
</dbReference>
<dbReference type="GO" id="GO:0009228">
    <property type="term" value="P:thiamine biosynthetic process"/>
    <property type="evidence" value="ECO:0007669"/>
    <property type="project" value="UniProtKB-KW"/>
</dbReference>
<dbReference type="GO" id="GO:0009229">
    <property type="term" value="P:thiamine diphosphate biosynthetic process"/>
    <property type="evidence" value="ECO:0007669"/>
    <property type="project" value="UniProtKB-UniRule"/>
</dbReference>
<dbReference type="FunFam" id="3.20.20.540:FF:000001">
    <property type="entry name" value="Phosphomethylpyrimidine synthase"/>
    <property type="match status" value="1"/>
</dbReference>
<dbReference type="Gene3D" id="6.10.250.620">
    <property type="match status" value="1"/>
</dbReference>
<dbReference type="Gene3D" id="3.20.20.540">
    <property type="entry name" value="Radical SAM ThiC family, central domain"/>
    <property type="match status" value="1"/>
</dbReference>
<dbReference type="HAMAP" id="MF_00089">
    <property type="entry name" value="ThiC"/>
    <property type="match status" value="1"/>
</dbReference>
<dbReference type="InterPro" id="IPR037509">
    <property type="entry name" value="ThiC"/>
</dbReference>
<dbReference type="InterPro" id="IPR025747">
    <property type="entry name" value="ThiC-associated_dom"/>
</dbReference>
<dbReference type="InterPro" id="IPR038521">
    <property type="entry name" value="ThiC/Bza_core_dom"/>
</dbReference>
<dbReference type="InterPro" id="IPR002817">
    <property type="entry name" value="ThiC/BzaA/B"/>
</dbReference>
<dbReference type="NCBIfam" id="NF006763">
    <property type="entry name" value="PRK09284.1"/>
    <property type="match status" value="1"/>
</dbReference>
<dbReference type="NCBIfam" id="NF009895">
    <property type="entry name" value="PRK13352.1"/>
    <property type="match status" value="1"/>
</dbReference>
<dbReference type="NCBIfam" id="TIGR00190">
    <property type="entry name" value="thiC"/>
    <property type="match status" value="1"/>
</dbReference>
<dbReference type="PANTHER" id="PTHR30557:SF1">
    <property type="entry name" value="PHOSPHOMETHYLPYRIMIDINE SYNTHASE, CHLOROPLASTIC"/>
    <property type="match status" value="1"/>
</dbReference>
<dbReference type="PANTHER" id="PTHR30557">
    <property type="entry name" value="THIAMINE BIOSYNTHESIS PROTEIN THIC"/>
    <property type="match status" value="1"/>
</dbReference>
<dbReference type="Pfam" id="PF13667">
    <property type="entry name" value="ThiC-associated"/>
    <property type="match status" value="1"/>
</dbReference>
<dbReference type="Pfam" id="PF01964">
    <property type="entry name" value="ThiC_Rad_SAM"/>
    <property type="match status" value="1"/>
</dbReference>
<dbReference type="SFLD" id="SFLDF00407">
    <property type="entry name" value="phosphomethylpyrimidine_syntha"/>
    <property type="match status" value="1"/>
</dbReference>
<dbReference type="SFLD" id="SFLDG01114">
    <property type="entry name" value="phosphomethylpyrimidine_syntha"/>
    <property type="match status" value="1"/>
</dbReference>
<dbReference type="SFLD" id="SFLDS00113">
    <property type="entry name" value="Radical_SAM_Phosphomethylpyrim"/>
    <property type="match status" value="1"/>
</dbReference>
<reference key="1">
    <citation type="journal article" date="2008" name="BMC Genomics">
        <title>Genome sequence and rapid evolution of the rice pathogen Xanthomonas oryzae pv. oryzae PXO99A.</title>
        <authorList>
            <person name="Salzberg S.L."/>
            <person name="Sommer D.D."/>
            <person name="Schatz M.C."/>
            <person name="Phillippy A.M."/>
            <person name="Rabinowicz P.D."/>
            <person name="Tsuge S."/>
            <person name="Furutani A."/>
            <person name="Ochiai H."/>
            <person name="Delcher A.L."/>
            <person name="Kelley D."/>
            <person name="Madupu R."/>
            <person name="Puiu D."/>
            <person name="Radune D."/>
            <person name="Shumway M."/>
            <person name="Trapnell C."/>
            <person name="Aparna G."/>
            <person name="Jha G."/>
            <person name="Pandey A."/>
            <person name="Patil P.B."/>
            <person name="Ishihara H."/>
            <person name="Meyer D.F."/>
            <person name="Szurek B."/>
            <person name="Verdier V."/>
            <person name="Koebnik R."/>
            <person name="Dow J.M."/>
            <person name="Ryan R.P."/>
            <person name="Hirata H."/>
            <person name="Tsuyumu S."/>
            <person name="Won Lee S."/>
            <person name="Seo Y.-S."/>
            <person name="Sriariyanum M."/>
            <person name="Ronald P.C."/>
            <person name="Sonti R.V."/>
            <person name="Van Sluys M.-A."/>
            <person name="Leach J.E."/>
            <person name="White F.F."/>
            <person name="Bogdanove A.J."/>
        </authorList>
    </citation>
    <scope>NUCLEOTIDE SEQUENCE [LARGE SCALE GENOMIC DNA]</scope>
    <source>
        <strain>PXO99A</strain>
    </source>
</reference>
<gene>
    <name evidence="1" type="primary">thiC</name>
    <name type="ordered locus">PXO_02603</name>
</gene>
<accession>B2SNG3</accession>
<sequence length="625" mass="69227">MNAAPTVLQQQAQSLSEAVTQPIPGSRKIFVQGSRADLQVPMREIALTRTPTLFGGEENPPLSVYDTSGPYTDPQVAIDLAVGLAPLRAHWIAERGDTVALDGLSSSFGRGREHDARLDAVRFPARRLPRVAREGANVTQMHYARRGIITPEMEYVAIRENQRLEAVTDASLRKQHPGEAFGASIQQRITPEFVREEIARGRAILPNNINHPESEPMIIGRNFLTKINANIGNSAVSSGIAEEVEKLVWSIRWGGDTVMDLSTGKHIHETREWIIRNSPVPIGTVPIYQALEKVDGRAEALTWEIFRDTLIEQAEQGVDYFTIHAGVLLRYVPLTAKRVTGIVSRGGSIMAKWCLAHHKENFLYTHFEDICQIMKAYDVAFSLGDGLRPGCIADANDAAQFGELETLGELTKLAWKHDVQTMIEGPGHVPMQLIKENMDKQLRECGEAPFYTLGPLTTDIAPGYDHITSAIGAAMIGWFGTAMLCYVTPKEHLGLPNRQDVRDGIMAYKIAAHAADLAKGHPGAQVRDNALSKARFEFRWDDQFHLGLDPEKAKEFHDETLPKDAHKLAHFCSMCGPHFCSMKITQDVRDYAAEHGMDDAQALSTGMQEKSAQFLAQGAQVYRPM</sequence>
<keyword id="KW-0004">4Fe-4S</keyword>
<keyword id="KW-0408">Iron</keyword>
<keyword id="KW-0411">Iron-sulfur</keyword>
<keyword id="KW-0456">Lyase</keyword>
<keyword id="KW-0479">Metal-binding</keyword>
<keyword id="KW-0949">S-adenosyl-L-methionine</keyword>
<keyword id="KW-0784">Thiamine biosynthesis</keyword>
<keyword id="KW-0862">Zinc</keyword>
<name>THIC_XANOP</name>
<proteinExistence type="inferred from homology"/>
<evidence type="ECO:0000255" key="1">
    <source>
        <dbReference type="HAMAP-Rule" id="MF_00089"/>
    </source>
</evidence>
<protein>
    <recommendedName>
        <fullName evidence="1">Phosphomethylpyrimidine synthase</fullName>
        <ecNumber evidence="1">4.1.99.17</ecNumber>
    </recommendedName>
    <alternativeName>
        <fullName evidence="1">Hydroxymethylpyrimidine phosphate synthase</fullName>
        <shortName evidence="1">HMP-P synthase</shortName>
        <shortName evidence="1">HMP-phosphate synthase</shortName>
        <shortName evidence="1">HMPP synthase</shortName>
    </alternativeName>
    <alternativeName>
        <fullName evidence="1">Thiamine biosynthesis protein ThiC</fullName>
    </alternativeName>
</protein>
<organism>
    <name type="scientific">Xanthomonas oryzae pv. oryzae (strain PXO99A)</name>
    <dbReference type="NCBI Taxonomy" id="360094"/>
    <lineage>
        <taxon>Bacteria</taxon>
        <taxon>Pseudomonadati</taxon>
        <taxon>Pseudomonadota</taxon>
        <taxon>Gammaproteobacteria</taxon>
        <taxon>Lysobacterales</taxon>
        <taxon>Lysobacteraceae</taxon>
        <taxon>Xanthomonas</taxon>
    </lineage>
</organism>